<organism>
    <name type="scientific">Drosophila melanogaster</name>
    <name type="common">Fruit fly</name>
    <dbReference type="NCBI Taxonomy" id="7227"/>
    <lineage>
        <taxon>Eukaryota</taxon>
        <taxon>Metazoa</taxon>
        <taxon>Ecdysozoa</taxon>
        <taxon>Arthropoda</taxon>
        <taxon>Hexapoda</taxon>
        <taxon>Insecta</taxon>
        <taxon>Pterygota</taxon>
        <taxon>Neoptera</taxon>
        <taxon>Endopterygota</taxon>
        <taxon>Diptera</taxon>
        <taxon>Brachycera</taxon>
        <taxon>Muscomorpha</taxon>
        <taxon>Ephydroidea</taxon>
        <taxon>Drosophilidae</taxon>
        <taxon>Drosophila</taxon>
        <taxon>Sophophora</taxon>
    </lineage>
</organism>
<evidence type="ECO:0000255" key="1"/>
<evidence type="ECO:0000305" key="2"/>
<reference key="1">
    <citation type="journal article" date="1985" name="Chromosoma">
        <title>Coding and potential regulatory sequences of a cluster of chorion genes in Drosophila melanogaster.</title>
        <authorList>
            <person name="Wong Y.-C."/>
            <person name="Pustell J."/>
            <person name="Spoerel N."/>
            <person name="Kafatos F.C."/>
        </authorList>
    </citation>
    <scope>NUCLEOTIDE SEQUENCE [GENOMIC DNA]</scope>
</reference>
<reference key="2">
    <citation type="journal article" date="1985" name="Chromosoma">
        <title>DNA sequence of a 3.8 kilobase pair region controlling Drosophila chorion gene amplification.</title>
        <authorList>
            <person name="Levine J."/>
            <person name="Spradling A."/>
        </authorList>
    </citation>
    <scope>NUCLEOTIDE SEQUENCE [GENOMIC DNA]</scope>
    <source>
        <strain>Canton-S</strain>
    </source>
</reference>
<reference key="3">
    <citation type="journal article" date="2007" name="Mol. Biol. Evol.">
        <title>Rapid evolution of outer egg membrane proteins in the Drosophila melanogaster subgroup: a case of ecologically driven evolution of female reproductive traits.</title>
        <authorList>
            <person name="Jagadeeshan S."/>
            <person name="Singh R.S."/>
        </authorList>
    </citation>
    <scope>NUCLEOTIDE SEQUENCE [GENOMIC DNA]</scope>
</reference>
<reference key="4">
    <citation type="journal article" date="2000" name="Science">
        <title>The genome sequence of Drosophila melanogaster.</title>
        <authorList>
            <person name="Adams M.D."/>
            <person name="Celniker S.E."/>
            <person name="Holt R.A."/>
            <person name="Evans C.A."/>
            <person name="Gocayne J.D."/>
            <person name="Amanatides P.G."/>
            <person name="Scherer S.E."/>
            <person name="Li P.W."/>
            <person name="Hoskins R.A."/>
            <person name="Galle R.F."/>
            <person name="George R.A."/>
            <person name="Lewis S.E."/>
            <person name="Richards S."/>
            <person name="Ashburner M."/>
            <person name="Henderson S.N."/>
            <person name="Sutton G.G."/>
            <person name="Wortman J.R."/>
            <person name="Yandell M.D."/>
            <person name="Zhang Q."/>
            <person name="Chen L.X."/>
            <person name="Brandon R.C."/>
            <person name="Rogers Y.-H.C."/>
            <person name="Blazej R.G."/>
            <person name="Champe M."/>
            <person name="Pfeiffer B.D."/>
            <person name="Wan K.H."/>
            <person name="Doyle C."/>
            <person name="Baxter E.G."/>
            <person name="Helt G."/>
            <person name="Nelson C.R."/>
            <person name="Miklos G.L.G."/>
            <person name="Abril J.F."/>
            <person name="Agbayani A."/>
            <person name="An H.-J."/>
            <person name="Andrews-Pfannkoch C."/>
            <person name="Baldwin D."/>
            <person name="Ballew R.M."/>
            <person name="Basu A."/>
            <person name="Baxendale J."/>
            <person name="Bayraktaroglu L."/>
            <person name="Beasley E.M."/>
            <person name="Beeson K.Y."/>
            <person name="Benos P.V."/>
            <person name="Berman B.P."/>
            <person name="Bhandari D."/>
            <person name="Bolshakov S."/>
            <person name="Borkova D."/>
            <person name="Botchan M.R."/>
            <person name="Bouck J."/>
            <person name="Brokstein P."/>
            <person name="Brottier P."/>
            <person name="Burtis K.C."/>
            <person name="Busam D.A."/>
            <person name="Butler H."/>
            <person name="Cadieu E."/>
            <person name="Center A."/>
            <person name="Chandra I."/>
            <person name="Cherry J.M."/>
            <person name="Cawley S."/>
            <person name="Dahlke C."/>
            <person name="Davenport L.B."/>
            <person name="Davies P."/>
            <person name="de Pablos B."/>
            <person name="Delcher A."/>
            <person name="Deng Z."/>
            <person name="Mays A.D."/>
            <person name="Dew I."/>
            <person name="Dietz S.M."/>
            <person name="Dodson K."/>
            <person name="Doup L.E."/>
            <person name="Downes M."/>
            <person name="Dugan-Rocha S."/>
            <person name="Dunkov B.C."/>
            <person name="Dunn P."/>
            <person name="Durbin K.J."/>
            <person name="Evangelista C.C."/>
            <person name="Ferraz C."/>
            <person name="Ferriera S."/>
            <person name="Fleischmann W."/>
            <person name="Fosler C."/>
            <person name="Gabrielian A.E."/>
            <person name="Garg N.S."/>
            <person name="Gelbart W.M."/>
            <person name="Glasser K."/>
            <person name="Glodek A."/>
            <person name="Gong F."/>
            <person name="Gorrell J.H."/>
            <person name="Gu Z."/>
            <person name="Guan P."/>
            <person name="Harris M."/>
            <person name="Harris N.L."/>
            <person name="Harvey D.A."/>
            <person name="Heiman T.J."/>
            <person name="Hernandez J.R."/>
            <person name="Houck J."/>
            <person name="Hostin D."/>
            <person name="Houston K.A."/>
            <person name="Howland T.J."/>
            <person name="Wei M.-H."/>
            <person name="Ibegwam C."/>
            <person name="Jalali M."/>
            <person name="Kalush F."/>
            <person name="Karpen G.H."/>
            <person name="Ke Z."/>
            <person name="Kennison J.A."/>
            <person name="Ketchum K.A."/>
            <person name="Kimmel B.E."/>
            <person name="Kodira C.D."/>
            <person name="Kraft C.L."/>
            <person name="Kravitz S."/>
            <person name="Kulp D."/>
            <person name="Lai Z."/>
            <person name="Lasko P."/>
            <person name="Lei Y."/>
            <person name="Levitsky A.A."/>
            <person name="Li J.H."/>
            <person name="Li Z."/>
            <person name="Liang Y."/>
            <person name="Lin X."/>
            <person name="Liu X."/>
            <person name="Mattei B."/>
            <person name="McIntosh T.C."/>
            <person name="McLeod M.P."/>
            <person name="McPherson D."/>
            <person name="Merkulov G."/>
            <person name="Milshina N.V."/>
            <person name="Mobarry C."/>
            <person name="Morris J."/>
            <person name="Moshrefi A."/>
            <person name="Mount S.M."/>
            <person name="Moy M."/>
            <person name="Murphy B."/>
            <person name="Murphy L."/>
            <person name="Muzny D.M."/>
            <person name="Nelson D.L."/>
            <person name="Nelson D.R."/>
            <person name="Nelson K.A."/>
            <person name="Nixon K."/>
            <person name="Nusskern D.R."/>
            <person name="Pacleb J.M."/>
            <person name="Palazzolo M."/>
            <person name="Pittman G.S."/>
            <person name="Pan S."/>
            <person name="Pollard J."/>
            <person name="Puri V."/>
            <person name="Reese M.G."/>
            <person name="Reinert K."/>
            <person name="Remington K."/>
            <person name="Saunders R.D.C."/>
            <person name="Scheeler F."/>
            <person name="Shen H."/>
            <person name="Shue B.C."/>
            <person name="Siden-Kiamos I."/>
            <person name="Simpson M."/>
            <person name="Skupski M.P."/>
            <person name="Smith T.J."/>
            <person name="Spier E."/>
            <person name="Spradling A.C."/>
            <person name="Stapleton M."/>
            <person name="Strong R."/>
            <person name="Sun E."/>
            <person name="Svirskas R."/>
            <person name="Tector C."/>
            <person name="Turner R."/>
            <person name="Venter E."/>
            <person name="Wang A.H."/>
            <person name="Wang X."/>
            <person name="Wang Z.-Y."/>
            <person name="Wassarman D.A."/>
            <person name="Weinstock G.M."/>
            <person name="Weissenbach J."/>
            <person name="Williams S.M."/>
            <person name="Woodage T."/>
            <person name="Worley K.C."/>
            <person name="Wu D."/>
            <person name="Yang S."/>
            <person name="Yao Q.A."/>
            <person name="Ye J."/>
            <person name="Yeh R.-F."/>
            <person name="Zaveri J.S."/>
            <person name="Zhan M."/>
            <person name="Zhang G."/>
            <person name="Zhao Q."/>
            <person name="Zheng L."/>
            <person name="Zheng X.H."/>
            <person name="Zhong F.N."/>
            <person name="Zhong W."/>
            <person name="Zhou X."/>
            <person name="Zhu S.C."/>
            <person name="Zhu X."/>
            <person name="Smith H.O."/>
            <person name="Gibbs R.A."/>
            <person name="Myers E.W."/>
            <person name="Rubin G.M."/>
            <person name="Venter J.C."/>
        </authorList>
    </citation>
    <scope>NUCLEOTIDE SEQUENCE [LARGE SCALE GENOMIC DNA]</scope>
    <source>
        <strain>Berkeley</strain>
    </source>
</reference>
<reference key="5">
    <citation type="journal article" date="2002" name="Genome Biol.">
        <title>Annotation of the Drosophila melanogaster euchromatic genome: a systematic review.</title>
        <authorList>
            <person name="Misra S."/>
            <person name="Crosby M.A."/>
            <person name="Mungall C.J."/>
            <person name="Matthews B.B."/>
            <person name="Campbell K.S."/>
            <person name="Hradecky P."/>
            <person name="Huang Y."/>
            <person name="Kaminker J.S."/>
            <person name="Millburn G.H."/>
            <person name="Prochnik S.E."/>
            <person name="Smith C.D."/>
            <person name="Tupy J.L."/>
            <person name="Whitfield E.J."/>
            <person name="Bayraktaroglu L."/>
            <person name="Berman B.P."/>
            <person name="Bettencourt B.R."/>
            <person name="Celniker S.E."/>
            <person name="de Grey A.D.N.J."/>
            <person name="Drysdale R.A."/>
            <person name="Harris N.L."/>
            <person name="Richter J."/>
            <person name="Russo S."/>
            <person name="Schroeder A.J."/>
            <person name="Shu S.Q."/>
            <person name="Stapleton M."/>
            <person name="Yamada C."/>
            <person name="Ashburner M."/>
            <person name="Gelbart W.M."/>
            <person name="Rubin G.M."/>
            <person name="Lewis S.E."/>
        </authorList>
    </citation>
    <scope>GENOME REANNOTATION</scope>
    <source>
        <strain>Berkeley</strain>
    </source>
</reference>
<reference key="6">
    <citation type="submission" date="2007-12" db="EMBL/GenBank/DDBJ databases">
        <authorList>
            <person name="Stapleton M."/>
            <person name="Carlson J.W."/>
            <person name="Frise E."/>
            <person name="Kapadia B."/>
            <person name="Park S."/>
            <person name="Wan K.H."/>
            <person name="Yu C."/>
            <person name="Celniker S.E."/>
        </authorList>
    </citation>
    <scope>NUCLEOTIDE SEQUENCE [LARGE SCALE MRNA]</scope>
    <source>
        <strain>Berkeley</strain>
    </source>
</reference>
<protein>
    <recommendedName>
        <fullName>Chorion protein S18</fullName>
    </recommendedName>
</protein>
<name>CH18_DROME</name>
<accession>P07184</accession>
<accession>A4ULX3</accession>
<accession>A8E6T8</accession>
<accession>Q9VSP1</accession>
<comment type="function">
    <text>Chorion membrane (egg shell) protein; plays a role in protecting the egg from the environment.</text>
</comment>
<comment type="subcellular location">
    <subcellularLocation>
        <location>Secreted</location>
    </subcellularLocation>
</comment>
<comment type="similarity">
    <text evidence="2">Belongs to the chorion protein S15/S18 family.</text>
</comment>
<keyword id="KW-1185">Reference proteome</keyword>
<keyword id="KW-0964">Secreted</keyword>
<keyword id="KW-0732">Signal</keyword>
<gene>
    <name type="primary">Cp18</name>
    <name type="synonym">s18</name>
    <name type="ORF">CG6517</name>
</gene>
<sequence length="172" mass="17231">MMKFMCICLCAISAVSANSYGRSRGGYGGAPVGGYAYQVQPALTVKAIVPSYGGGYGGNHGGYGGAYESVPVPVSSAYSGANVGSQYSGSGYGGAPPVDAQAIALAKLALAAPSAGAPLVWKEAPRYAQPVYPPTSYVNQEYGHSEKVKGGSAAAAASSVAAGKKGYKRPSY</sequence>
<proteinExistence type="evidence at transcript level"/>
<dbReference type="EMBL" id="X02497">
    <property type="protein sequence ID" value="CAA26328.1"/>
    <property type="molecule type" value="Genomic_DNA"/>
</dbReference>
<dbReference type="EMBL" id="X06257">
    <property type="protein sequence ID" value="CAA29602.1"/>
    <property type="molecule type" value="Genomic_DNA"/>
</dbReference>
<dbReference type="EMBL" id="EF441641">
    <property type="protein sequence ID" value="ABO71682.1"/>
    <property type="molecule type" value="Genomic_DNA"/>
</dbReference>
<dbReference type="EMBL" id="AE014296">
    <property type="protein sequence ID" value="AAF50375.1"/>
    <property type="molecule type" value="Genomic_DNA"/>
</dbReference>
<dbReference type="EMBL" id="BT030880">
    <property type="protein sequence ID" value="ABV82262.1"/>
    <property type="molecule type" value="mRNA"/>
</dbReference>
<dbReference type="EMBL" id="BT030881">
    <property type="protein sequence ID" value="ABV82263.1"/>
    <property type="molecule type" value="mRNA"/>
</dbReference>
<dbReference type="EMBL" id="BT030884">
    <property type="protein sequence ID" value="ABV82266.1"/>
    <property type="molecule type" value="mRNA"/>
</dbReference>
<dbReference type="EMBL" id="BT030898">
    <property type="protein sequence ID" value="ABV82280.1"/>
    <property type="molecule type" value="mRNA"/>
</dbReference>
<dbReference type="EMBL" id="BT031212">
    <property type="protein sequence ID" value="ABY20453.1"/>
    <property type="molecule type" value="mRNA"/>
</dbReference>
<dbReference type="EMBL" id="BT031216">
    <property type="protein sequence ID" value="ABY20457.1"/>
    <property type="molecule type" value="mRNA"/>
</dbReference>
<dbReference type="EMBL" id="BT031218">
    <property type="protein sequence ID" value="ABY20459.1"/>
    <property type="molecule type" value="mRNA"/>
</dbReference>
<dbReference type="EMBL" id="BT031221">
    <property type="protein sequence ID" value="ABY20462.1"/>
    <property type="molecule type" value="mRNA"/>
</dbReference>
<dbReference type="EMBL" id="BT031229">
    <property type="protein sequence ID" value="ABY20470.1"/>
    <property type="molecule type" value="mRNA"/>
</dbReference>
<dbReference type="RefSeq" id="NP_523978.1">
    <property type="nucleotide sequence ID" value="NM_079254.2"/>
</dbReference>
<dbReference type="BioGRID" id="64404">
    <property type="interactions" value="3"/>
</dbReference>
<dbReference type="IntAct" id="P07184">
    <property type="interactions" value="1"/>
</dbReference>
<dbReference type="STRING" id="7227.FBpp0076298"/>
<dbReference type="PaxDb" id="7227-FBpp0076298"/>
<dbReference type="DNASU" id="38998"/>
<dbReference type="EnsemblMetazoa" id="FBtr0076571">
    <property type="protein sequence ID" value="FBpp0076298"/>
    <property type="gene ID" value="FBgn0000357"/>
</dbReference>
<dbReference type="GeneID" id="38998"/>
<dbReference type="KEGG" id="dme:Dmel_CG6517"/>
<dbReference type="AGR" id="FB:FBgn0000357"/>
<dbReference type="CTD" id="38998"/>
<dbReference type="FlyBase" id="FBgn0000357">
    <property type="gene designation" value="Cp18"/>
</dbReference>
<dbReference type="VEuPathDB" id="VectorBase:FBgn0000357"/>
<dbReference type="eggNOG" id="ENOG502TBAZ">
    <property type="taxonomic scope" value="Eukaryota"/>
</dbReference>
<dbReference type="HOGENOM" id="CLU_1541752_0_0_1"/>
<dbReference type="InParanoid" id="P07184"/>
<dbReference type="OMA" id="FMCIFVC"/>
<dbReference type="PhylomeDB" id="P07184"/>
<dbReference type="SignaLink" id="P07184"/>
<dbReference type="BioGRID-ORCS" id="38998">
    <property type="hits" value="0 hits in 1 CRISPR screen"/>
</dbReference>
<dbReference type="GenomeRNAi" id="38998"/>
<dbReference type="PRO" id="PR:P07184"/>
<dbReference type="Proteomes" id="UP000000803">
    <property type="component" value="Chromosome 3L"/>
</dbReference>
<dbReference type="Bgee" id="FBgn0000357">
    <property type="expression patterns" value="Expressed in secondary oocyte and 41 other cell types or tissues"/>
</dbReference>
<dbReference type="ExpressionAtlas" id="P07184">
    <property type="expression patterns" value="baseline and differential"/>
</dbReference>
<dbReference type="GO" id="GO:0042600">
    <property type="term" value="C:egg chorion"/>
    <property type="evidence" value="ECO:0000305"/>
    <property type="project" value="FlyBase"/>
</dbReference>
<dbReference type="GO" id="GO:0005576">
    <property type="term" value="C:extracellular region"/>
    <property type="evidence" value="ECO:0007669"/>
    <property type="project" value="UniProtKB-SubCell"/>
</dbReference>
<dbReference type="GO" id="GO:0005213">
    <property type="term" value="F:structural constituent of egg chorion"/>
    <property type="evidence" value="ECO:0000304"/>
    <property type="project" value="FlyBase"/>
</dbReference>
<dbReference type="GO" id="GO:0007304">
    <property type="term" value="P:chorion-containing eggshell formation"/>
    <property type="evidence" value="ECO:0000270"/>
    <property type="project" value="FlyBase"/>
</dbReference>
<dbReference type="InterPro" id="IPR005649">
    <property type="entry name" value="Chorion_2"/>
</dbReference>
<dbReference type="Pfam" id="PF03964">
    <property type="entry name" value="Chorion_2"/>
    <property type="match status" value="1"/>
</dbReference>
<feature type="signal peptide" evidence="1">
    <location>
        <begin position="1"/>
        <end position="17"/>
    </location>
</feature>
<feature type="chain" id="PRO_0000089621" description="Chorion protein S18">
    <location>
        <begin position="18"/>
        <end position="172"/>
    </location>
</feature>
<feature type="sequence conflict" description="In Ref. 1; CAA26328 and 2; CAA29602." evidence="2" ref="1 2">
    <original>S</original>
    <variation>P</variation>
    <location>
        <position position="23"/>
    </location>
</feature>
<feature type="sequence conflict" description="In Ref. 1; CAA26328 and 2; CAA29602." evidence="2" ref="1 2">
    <original>A</original>
    <variation>V</variation>
    <location>
        <position position="77"/>
    </location>
</feature>